<proteinExistence type="inferred from homology"/>
<keyword id="KW-0150">Chloroplast</keyword>
<keyword id="KW-0472">Membrane</keyword>
<keyword id="KW-0602">Photosynthesis</keyword>
<keyword id="KW-0604">Photosystem II</keyword>
<keyword id="KW-0934">Plastid</keyword>
<keyword id="KW-0793">Thylakoid</keyword>
<keyword id="KW-0812">Transmembrane</keyword>
<keyword id="KW-1133">Transmembrane helix</keyword>
<dbReference type="EMBL" id="AY147499">
    <property type="protein sequence ID" value="AAN32102.1"/>
    <property type="molecule type" value="Genomic_DNA"/>
</dbReference>
<dbReference type="RefSeq" id="YP_009972082.1">
    <property type="nucleotide sequence ID" value="NC_051949.1"/>
</dbReference>
<dbReference type="SMR" id="Q67IA1"/>
<dbReference type="GeneID" id="60456610"/>
<dbReference type="GO" id="GO:0009535">
    <property type="term" value="C:chloroplast thylakoid membrane"/>
    <property type="evidence" value="ECO:0007669"/>
    <property type="project" value="UniProtKB-SubCell"/>
</dbReference>
<dbReference type="GO" id="GO:0009539">
    <property type="term" value="C:photosystem II reaction center"/>
    <property type="evidence" value="ECO:0007669"/>
    <property type="project" value="InterPro"/>
</dbReference>
<dbReference type="GO" id="GO:0015979">
    <property type="term" value="P:photosynthesis"/>
    <property type="evidence" value="ECO:0007669"/>
    <property type="project" value="UniProtKB-UniRule"/>
</dbReference>
<dbReference type="HAMAP" id="MF_00808">
    <property type="entry name" value="PSII_PsbT"/>
    <property type="match status" value="1"/>
</dbReference>
<dbReference type="InterPro" id="IPR001743">
    <property type="entry name" value="PSII_PsbT"/>
</dbReference>
<dbReference type="InterPro" id="IPR037268">
    <property type="entry name" value="PSII_PsbT_sf"/>
</dbReference>
<dbReference type="PANTHER" id="PTHR36411">
    <property type="match status" value="1"/>
</dbReference>
<dbReference type="PANTHER" id="PTHR36411:SF2">
    <property type="entry name" value="PHOTOSYSTEM II REACTION CENTER PROTEIN T"/>
    <property type="match status" value="1"/>
</dbReference>
<dbReference type="Pfam" id="PF01405">
    <property type="entry name" value="PsbT"/>
    <property type="match status" value="1"/>
</dbReference>
<dbReference type="SUPFAM" id="SSF161029">
    <property type="entry name" value="Photosystem II reaction center protein T, PsbT"/>
    <property type="match status" value="1"/>
</dbReference>
<geneLocation type="chloroplast"/>
<feature type="chain" id="PRO_0000217908" description="Photosystem II reaction center protein T">
    <location>
        <begin position="1"/>
        <end position="33"/>
    </location>
</feature>
<feature type="transmembrane region" description="Helical" evidence="1">
    <location>
        <begin position="3"/>
        <end position="23"/>
    </location>
</feature>
<gene>
    <name evidence="1" type="primary">psbT</name>
</gene>
<sequence>MEALVYTFLLVSTLGIIFFAIFFREPPKVPTKK</sequence>
<protein>
    <recommendedName>
        <fullName evidence="1">Photosystem II reaction center protein T</fullName>
        <shortName evidence="1">PSII-T</shortName>
    </recommendedName>
</protein>
<reference key="1">
    <citation type="submission" date="2002-09" db="EMBL/GenBank/DDBJ databases">
        <title>Phylogenetic relationships among the major lineages of Asparagales based on a large chloroplast data set.</title>
        <authorList>
            <person name="McPherson M.A."/>
            <person name="Rai H.S."/>
            <person name="Wong W.A."/>
            <person name="Graham S.W."/>
        </authorList>
    </citation>
    <scope>NUCLEOTIDE SEQUENCE [GENOMIC DNA]</scope>
</reference>
<accession>Q67IA1</accession>
<name>PSBT_BUTUM</name>
<evidence type="ECO:0000255" key="1">
    <source>
        <dbReference type="HAMAP-Rule" id="MF_00808"/>
    </source>
</evidence>
<comment type="function">
    <text evidence="1">Found at the monomer-monomer interface of the photosystem II (PS II) dimer, plays a role in assembly and dimerization of PSII. PSII is a light-driven water plastoquinone oxidoreductase, using light energy to abstract electrons from H(2)O, generating a proton gradient subsequently used for ATP formation.</text>
</comment>
<comment type="subunit">
    <text evidence="1">PSII is composed of 1 copy each of membrane proteins PsbA, PsbB, PsbC, PsbD, PsbE, PsbF, PsbH, PsbI, PsbJ, PsbK, PsbL, PsbM, PsbT, PsbY, PsbZ, Psb30/Ycf12, at least 3 peripheral proteins of the oxygen-evolving complex and a large number of cofactors. It forms dimeric complexes.</text>
</comment>
<comment type="subcellular location">
    <subcellularLocation>
        <location evidence="1">Plastid</location>
        <location evidence="1">Chloroplast thylakoid membrane</location>
        <topology evidence="1">Single-pass membrane protein</topology>
    </subcellularLocation>
</comment>
<comment type="similarity">
    <text evidence="1">Belongs to the PsbT family.</text>
</comment>
<organism>
    <name type="scientific">Butomus umbellatus</name>
    <name type="common">Flowering rush</name>
    <dbReference type="NCBI Taxonomy" id="50236"/>
    <lineage>
        <taxon>Eukaryota</taxon>
        <taxon>Viridiplantae</taxon>
        <taxon>Streptophyta</taxon>
        <taxon>Embryophyta</taxon>
        <taxon>Tracheophyta</taxon>
        <taxon>Spermatophyta</taxon>
        <taxon>Magnoliopsida</taxon>
        <taxon>Liliopsida</taxon>
        <taxon>Butomaceae</taxon>
        <taxon>Butomus</taxon>
    </lineage>
</organism>